<reference key="1">
    <citation type="journal article" date="1994" name="Mol. Gen. Genet.">
        <title>Structure and function of a mating-type gene from the homothallic species Neurospora africana.</title>
        <authorList>
            <person name="Glass N.L."/>
            <person name="Smith M.L."/>
        </authorList>
    </citation>
    <scope>NUCLEOTIDE SEQUENCE [GENOMIC DNA]</scope>
</reference>
<evidence type="ECO:0000255" key="1">
    <source>
        <dbReference type="PROSITE-ProRule" id="PRU00655"/>
    </source>
</evidence>
<keyword id="KW-0238">DNA-binding</keyword>
<keyword id="KW-0539">Nucleus</keyword>
<keyword id="KW-0804">Transcription</keyword>
<keyword id="KW-0805">Transcription regulation</keyword>
<proteinExistence type="inferred from homology"/>
<accession>Q02292</accession>
<protein>
    <recommendedName>
        <fullName>Mating type protein A-1</fullName>
        <shortName>Mt A-1</shortName>
    </recommendedName>
</protein>
<dbReference type="EMBL" id="S73321">
    <property type="protein sequence ID" value="AAB31846.1"/>
    <property type="molecule type" value="Genomic_DNA"/>
</dbReference>
<dbReference type="PIR" id="S46288">
    <property type="entry name" value="S46288"/>
</dbReference>
<dbReference type="GO" id="GO:0005634">
    <property type="term" value="C:nucleus"/>
    <property type="evidence" value="ECO:0007669"/>
    <property type="project" value="UniProtKB-SubCell"/>
</dbReference>
<dbReference type="GO" id="GO:0008301">
    <property type="term" value="F:DNA binding, bending"/>
    <property type="evidence" value="ECO:0007669"/>
    <property type="project" value="InterPro"/>
</dbReference>
<dbReference type="GO" id="GO:0045895">
    <property type="term" value="P:positive regulation of mating-type specific transcription, DNA-templated"/>
    <property type="evidence" value="ECO:0007669"/>
    <property type="project" value="InterPro"/>
</dbReference>
<dbReference type="InterPro" id="IPR006856">
    <property type="entry name" value="MATalpha_HMGbox"/>
</dbReference>
<dbReference type="Pfam" id="PF04769">
    <property type="entry name" value="MATalpha_HMGbox"/>
    <property type="match status" value="1"/>
</dbReference>
<dbReference type="PROSITE" id="PS51325">
    <property type="entry name" value="ALPHA_BOX"/>
    <property type="match status" value="1"/>
</dbReference>
<gene>
    <name type="primary">MTA-1</name>
</gene>
<organism>
    <name type="scientific">Neurospora africana</name>
    <dbReference type="NCBI Taxonomy" id="5143"/>
    <lineage>
        <taxon>Eukaryota</taxon>
        <taxon>Fungi</taxon>
        <taxon>Dikarya</taxon>
        <taxon>Ascomycota</taxon>
        <taxon>Pezizomycotina</taxon>
        <taxon>Sordariomycetes</taxon>
        <taxon>Sordariomycetidae</taxon>
        <taxon>Sordariales</taxon>
        <taxon>Sordariaceae</taxon>
        <taxon>Neurospora</taxon>
    </lineage>
</organism>
<feature type="chain" id="PRO_0000206018" description="Mating type protein A-1">
    <location>
        <begin position="1"/>
        <end position="286"/>
    </location>
</feature>
<feature type="DNA-binding region" description="Alpha box" evidence="1">
    <location>
        <begin position="40"/>
        <end position="95"/>
    </location>
</feature>
<name>MATA_NEUAF</name>
<sequence length="286" mass="32431">MSCVDQIVKTFADLTEGDREAAMRAFSMMMRTEPVRQTPAAKKKVNGFMSFRSYYSPLFSQLPQKERSPFMTILWQHDPFHNEWNFMCSVYSSIRTYLEQEKVTLQLWIHYRVRHLGVIIRDNYMASFGWNLVQLPNGTHDLERTALPLVQHNLQPMNGLCLFTKCLESGLPLANPHPVIAKLSDPSYDMIWFNKRPHRQQGHAGQTYNSELGVSALFPCNHAVAAAVDGITDLPLSHWLQQGDFGTEAGFSPQFETLLDSILENGNASINDPYNMALGMGVPMMG</sequence>
<comment type="function">
    <text>Required for expression of the heterokaryon incompatibility and sexual functions.</text>
</comment>
<comment type="subcellular location">
    <subcellularLocation>
        <location evidence="1">Nucleus</location>
    </subcellularLocation>
</comment>
<comment type="similarity">
    <text evidence="1">Belongs to the MATALPHA1 family.</text>
</comment>